<proteinExistence type="inferred from homology"/>
<protein>
    <recommendedName>
        <fullName>Serine/threonine-protein phosphatase 2A activator 2</fullName>
        <ecNumber>5.2.1.8</ecNumber>
    </recommendedName>
    <alternativeName>
        <fullName>Peptidyl-prolyl cis-trans isomerase PTPA-2</fullName>
        <shortName>PPIase PTPA-2</shortName>
        <shortName>Rotamase PTPA-2</shortName>
    </alternativeName>
    <alternativeName>
        <fullName>Phosphotyrosyl phosphatase activator 2</fullName>
    </alternativeName>
</protein>
<organism>
    <name type="scientific">Cryptococcus neoformans var. neoformans serotype D (strain JEC21 / ATCC MYA-565)</name>
    <name type="common">Filobasidiella neoformans</name>
    <dbReference type="NCBI Taxonomy" id="214684"/>
    <lineage>
        <taxon>Eukaryota</taxon>
        <taxon>Fungi</taxon>
        <taxon>Dikarya</taxon>
        <taxon>Basidiomycota</taxon>
        <taxon>Agaricomycotina</taxon>
        <taxon>Tremellomycetes</taxon>
        <taxon>Tremellales</taxon>
        <taxon>Cryptococcaceae</taxon>
        <taxon>Cryptococcus</taxon>
        <taxon>Cryptococcus neoformans species complex</taxon>
    </lineage>
</organism>
<sequence>MSAPESSPSTFYTVPTKHILSKAHLAAFQRSKTHSDIFNFIEELNEDIVGKKLTEAGQGSERTRPLISILDSVREIAESTPPVDNKLSRFGNPAFKTFYDKVGDASLELHKRIPGLPEEAIQEVEVYFKESWGNKQRVDYGSGMELNFLSWLLCLAKLGVVTKEDYPFLVLGVFWRYIEVMRYLQSTYWLEPAGSHGVWGLDDYHFLPFLWGSGQLRNHKYLRPKAIHDPEILGEFSKDYMYLSCIEFINSIKTASLRWHSPMLDDISAVKTWEKVNQGMKKMFVAEVLGKLPVMQHALFGSLLPFPTPEEDPELKRALEEEDGQSATDMHGHIHDPSEKGWSMDCCGIPVPSAFAAAQDANSHKGVPTLGNRPGIKPIPFD</sequence>
<evidence type="ECO:0000250" key="1"/>
<evidence type="ECO:0000256" key="2">
    <source>
        <dbReference type="SAM" id="MobiDB-lite"/>
    </source>
</evidence>
<evidence type="ECO:0000305" key="3"/>
<keyword id="KW-0963">Cytoplasm</keyword>
<keyword id="KW-0413">Isomerase</keyword>
<keyword id="KW-1185">Reference proteome</keyword>
<keyword id="KW-0697">Rotamase</keyword>
<reference key="1">
    <citation type="journal article" date="2005" name="Science">
        <title>The genome of the basidiomycetous yeast and human pathogen Cryptococcus neoformans.</title>
        <authorList>
            <person name="Loftus B.J."/>
            <person name="Fung E."/>
            <person name="Roncaglia P."/>
            <person name="Rowley D."/>
            <person name="Amedeo P."/>
            <person name="Bruno D."/>
            <person name="Vamathevan J."/>
            <person name="Miranda M."/>
            <person name="Anderson I.J."/>
            <person name="Fraser J.A."/>
            <person name="Allen J.E."/>
            <person name="Bosdet I.E."/>
            <person name="Brent M.R."/>
            <person name="Chiu R."/>
            <person name="Doering T.L."/>
            <person name="Donlin M.J."/>
            <person name="D'Souza C.A."/>
            <person name="Fox D.S."/>
            <person name="Grinberg V."/>
            <person name="Fu J."/>
            <person name="Fukushima M."/>
            <person name="Haas B.J."/>
            <person name="Huang J.C."/>
            <person name="Janbon G."/>
            <person name="Jones S.J.M."/>
            <person name="Koo H.L."/>
            <person name="Krzywinski M.I."/>
            <person name="Kwon-Chung K.J."/>
            <person name="Lengeler K.B."/>
            <person name="Maiti R."/>
            <person name="Marra M.A."/>
            <person name="Marra R.E."/>
            <person name="Mathewson C.A."/>
            <person name="Mitchell T.G."/>
            <person name="Pertea M."/>
            <person name="Riggs F.R."/>
            <person name="Salzberg S.L."/>
            <person name="Schein J.E."/>
            <person name="Shvartsbeyn A."/>
            <person name="Shin H."/>
            <person name="Shumway M."/>
            <person name="Specht C.A."/>
            <person name="Suh B.B."/>
            <person name="Tenney A."/>
            <person name="Utterback T.R."/>
            <person name="Wickes B.L."/>
            <person name="Wortman J.R."/>
            <person name="Wye N.H."/>
            <person name="Kronstad J.W."/>
            <person name="Lodge J.K."/>
            <person name="Heitman J."/>
            <person name="Davis R.W."/>
            <person name="Fraser C.M."/>
            <person name="Hyman R.W."/>
        </authorList>
    </citation>
    <scope>NUCLEOTIDE SEQUENCE [LARGE SCALE GENOMIC DNA]</scope>
    <source>
        <strain>JEC21 / ATCC MYA-565</strain>
    </source>
</reference>
<dbReference type="EC" id="5.2.1.8"/>
<dbReference type="EMBL" id="AE017348">
    <property type="protein sequence ID" value="AAW45033.1"/>
    <property type="molecule type" value="Genomic_DNA"/>
</dbReference>
<dbReference type="RefSeq" id="XP_572340.1">
    <property type="nucleotide sequence ID" value="XM_572340.1"/>
</dbReference>
<dbReference type="SMR" id="P0CQ02"/>
<dbReference type="FunCoup" id="P0CQ02">
    <property type="interactions" value="56"/>
</dbReference>
<dbReference type="STRING" id="214684.P0CQ02"/>
<dbReference type="PaxDb" id="214684-P0CQ02"/>
<dbReference type="EnsemblFungi" id="AAW45033">
    <property type="protein sequence ID" value="AAW45033"/>
    <property type="gene ID" value="CNH01590"/>
</dbReference>
<dbReference type="GeneID" id="3259335"/>
<dbReference type="KEGG" id="cne:CNH01590"/>
<dbReference type="VEuPathDB" id="FungiDB:CNH01590"/>
<dbReference type="eggNOG" id="KOG2867">
    <property type="taxonomic scope" value="Eukaryota"/>
</dbReference>
<dbReference type="HOGENOM" id="CLU_030733_0_0_1"/>
<dbReference type="InParanoid" id="P0CQ02"/>
<dbReference type="OMA" id="SWIKINA"/>
<dbReference type="OrthoDB" id="16120at2759"/>
<dbReference type="Proteomes" id="UP000002149">
    <property type="component" value="Chromosome 8"/>
</dbReference>
<dbReference type="GO" id="GO:0005737">
    <property type="term" value="C:cytoplasm"/>
    <property type="evidence" value="ECO:0000318"/>
    <property type="project" value="GO_Central"/>
</dbReference>
<dbReference type="GO" id="GO:0005634">
    <property type="term" value="C:nucleus"/>
    <property type="evidence" value="ECO:0000318"/>
    <property type="project" value="GO_Central"/>
</dbReference>
<dbReference type="GO" id="GO:0000159">
    <property type="term" value="C:protein phosphatase type 2A complex"/>
    <property type="evidence" value="ECO:0000318"/>
    <property type="project" value="GO_Central"/>
</dbReference>
<dbReference type="GO" id="GO:0003755">
    <property type="term" value="F:peptidyl-prolyl cis-trans isomerase activity"/>
    <property type="evidence" value="ECO:0000318"/>
    <property type="project" value="GO_Central"/>
</dbReference>
<dbReference type="GO" id="GO:0008160">
    <property type="term" value="F:protein tyrosine phosphatase activator activity"/>
    <property type="evidence" value="ECO:0000318"/>
    <property type="project" value="GO_Central"/>
</dbReference>
<dbReference type="GO" id="GO:0007052">
    <property type="term" value="P:mitotic spindle organization"/>
    <property type="evidence" value="ECO:0000318"/>
    <property type="project" value="GO_Central"/>
</dbReference>
<dbReference type="GO" id="GO:0006970">
    <property type="term" value="P:response to osmotic stress"/>
    <property type="evidence" value="ECO:0007669"/>
    <property type="project" value="EnsemblFungi"/>
</dbReference>
<dbReference type="CDD" id="cd04087">
    <property type="entry name" value="PTPA"/>
    <property type="match status" value="1"/>
</dbReference>
<dbReference type="FunFam" id="1.20.120.1150:FF:000002">
    <property type="entry name" value="Serine/threonine-protein phosphatase 2A activator"/>
    <property type="match status" value="1"/>
</dbReference>
<dbReference type="Gene3D" id="1.20.120.1150">
    <property type="match status" value="1"/>
</dbReference>
<dbReference type="InterPro" id="IPR004327">
    <property type="entry name" value="Phstyr_phstse_ac"/>
</dbReference>
<dbReference type="InterPro" id="IPR043170">
    <property type="entry name" value="PTPA_C_lid"/>
</dbReference>
<dbReference type="InterPro" id="IPR037218">
    <property type="entry name" value="PTPA_sf"/>
</dbReference>
<dbReference type="PANTHER" id="PTHR10012">
    <property type="entry name" value="SERINE/THREONINE-PROTEIN PHOSPHATASE 2A REGULATORY SUBUNIT B"/>
    <property type="match status" value="1"/>
</dbReference>
<dbReference type="PANTHER" id="PTHR10012:SF5">
    <property type="entry name" value="SERINE_THREONINE-PROTEIN PHOSPHATASE 2A ACTIVATOR 2"/>
    <property type="match status" value="1"/>
</dbReference>
<dbReference type="Pfam" id="PF03095">
    <property type="entry name" value="PTPA"/>
    <property type="match status" value="1"/>
</dbReference>
<dbReference type="PIRSF" id="PIRSF016325">
    <property type="entry name" value="Phstyr_phstse_ac"/>
    <property type="match status" value="1"/>
</dbReference>
<dbReference type="SUPFAM" id="SSF140984">
    <property type="entry name" value="PTPA-like"/>
    <property type="match status" value="1"/>
</dbReference>
<gene>
    <name type="primary">RRD2</name>
    <name type="ordered locus">CNH01590</name>
</gene>
<accession>P0CQ02</accession>
<accession>Q55J30</accession>
<accession>Q5KCM5</accession>
<comment type="function">
    <text evidence="1">PPIases accelerate the folding of proteins. It catalyzes the cis-trans isomerization of proline imidic peptide bonds in oligopeptides. Acts as a regulatory subunit for PP2A-like phosphatases modulating their activity or substrate specificity, probably by inducing a conformational change in the catalytic subunit, a direct target of the PPIase. Can reactivate inactive phosphatase PP2A-phosphatase methylesterase complexes (PP2Ai) in presence of ATP and Mg(2+) by dissociating the inactive form from the complex (By similarity).</text>
</comment>
<comment type="catalytic activity">
    <reaction>
        <text>[protein]-peptidylproline (omega=180) = [protein]-peptidylproline (omega=0)</text>
        <dbReference type="Rhea" id="RHEA:16237"/>
        <dbReference type="Rhea" id="RHEA-COMP:10747"/>
        <dbReference type="Rhea" id="RHEA-COMP:10748"/>
        <dbReference type="ChEBI" id="CHEBI:83833"/>
        <dbReference type="ChEBI" id="CHEBI:83834"/>
        <dbReference type="EC" id="5.2.1.8"/>
    </reaction>
</comment>
<comment type="subcellular location">
    <subcellularLocation>
        <location evidence="1">Cytoplasm</location>
    </subcellularLocation>
</comment>
<comment type="similarity">
    <text evidence="3">Belongs to the PTPA-type PPIase family.</text>
</comment>
<feature type="chain" id="PRO_0000226111" description="Serine/threonine-protein phosphatase 2A activator 2">
    <location>
        <begin position="1"/>
        <end position="382"/>
    </location>
</feature>
<feature type="region of interest" description="Disordered" evidence="2">
    <location>
        <begin position="363"/>
        <end position="382"/>
    </location>
</feature>
<name>PTPA2_CRYNJ</name>